<accession>P9WEF9</accession>
<feature type="chain" id="PRO_0000462000" description="Myb-like transcriptional regulator mfmK">
    <location>
        <begin position="1"/>
        <end position="462"/>
    </location>
</feature>
<feature type="domain" description="HTH myb-type 1" evidence="1">
    <location>
        <begin position="1"/>
        <end position="54"/>
    </location>
</feature>
<feature type="domain" description="HTH myb-type 2" evidence="1">
    <location>
        <begin position="56"/>
        <end position="110"/>
    </location>
</feature>
<feature type="domain" description="HTH myb-type 3" evidence="1">
    <location>
        <begin position="113"/>
        <end position="162"/>
    </location>
</feature>
<feature type="DNA-binding region" description="H-T-H motif" evidence="1">
    <location>
        <begin position="32"/>
        <end position="52"/>
    </location>
</feature>
<feature type="DNA-binding region" description="H-T-H motif" evidence="1">
    <location>
        <begin position="83"/>
        <end position="106"/>
    </location>
</feature>
<feature type="DNA-binding region" description="H-T-H motif" evidence="1">
    <location>
        <begin position="134"/>
        <end position="158"/>
    </location>
</feature>
<feature type="region of interest" description="Disordered" evidence="2">
    <location>
        <begin position="159"/>
        <end position="184"/>
    </location>
</feature>
<feature type="region of interest" description="Disordered" evidence="2">
    <location>
        <begin position="216"/>
        <end position="262"/>
    </location>
</feature>
<feature type="region of interest" description="Disordered" evidence="2">
    <location>
        <begin position="374"/>
        <end position="408"/>
    </location>
</feature>
<feature type="compositionally biased region" description="Basic and acidic residues" evidence="2">
    <location>
        <begin position="159"/>
        <end position="175"/>
    </location>
</feature>
<feature type="compositionally biased region" description="Acidic residues" evidence="2">
    <location>
        <begin position="216"/>
        <end position="235"/>
    </location>
</feature>
<feature type="compositionally biased region" description="Polar residues" evidence="2">
    <location>
        <begin position="374"/>
        <end position="385"/>
    </location>
</feature>
<feature type="compositionally biased region" description="Polar residues" evidence="2">
    <location>
        <begin position="396"/>
        <end position="408"/>
    </location>
</feature>
<organism>
    <name type="scientific">Annulohypoxylon moriforme</name>
    <name type="common">Filamentous fungus</name>
    <name type="synonym">Hypoxylon moriforme</name>
    <dbReference type="NCBI Taxonomy" id="326622"/>
    <lineage>
        <taxon>Eukaryota</taxon>
        <taxon>Fungi</taxon>
        <taxon>Dikarya</taxon>
        <taxon>Ascomycota</taxon>
        <taxon>Pezizomycotina</taxon>
        <taxon>Sordariomycetes</taxon>
        <taxon>Xylariomycetidae</taxon>
        <taxon>Xylariales</taxon>
        <taxon>Hypoxylaceae</taxon>
        <taxon>Annulohypoxylon</taxon>
    </lineage>
</organism>
<protein>
    <recommendedName>
        <fullName evidence="4">Myb-like transcriptional regulator mfmK</fullName>
    </recommendedName>
    <alternativeName>
        <fullName evidence="4">11'-O-desmethylfendlerol biosynthesis cluster protein K</fullName>
    </alternativeName>
</protein>
<reference key="1">
    <citation type="journal article" date="2022" name="New Phytol.">
        <title>Ecological generalism drives hyperdiversity of secondary metabolite gene clusters in xylarialean endophytes.</title>
        <authorList>
            <person name="Franco M.E.E."/>
            <person name="Wisecaver J.H."/>
            <person name="Arnold A.E."/>
            <person name="Ju Y.M."/>
            <person name="Slot J.C."/>
            <person name="Ahrendt S."/>
            <person name="Moore L.P."/>
            <person name="Eastman K.E."/>
            <person name="Scott K."/>
            <person name="Konkel Z."/>
            <person name="Mondo S.J."/>
            <person name="Kuo A."/>
            <person name="Hayes R.D."/>
            <person name="Haridas S."/>
            <person name="Andreopoulos B."/>
            <person name="Riley R."/>
            <person name="LaButti K."/>
            <person name="Pangilinan J."/>
            <person name="Lipzen A."/>
            <person name="Amirebrahimi M."/>
            <person name="Yan J."/>
            <person name="Adam C."/>
            <person name="Keymanesh K."/>
            <person name="Ng V."/>
            <person name="Louie K."/>
            <person name="Northen T."/>
            <person name="Drula E."/>
            <person name="Henrissat B."/>
            <person name="Hsieh H.M."/>
            <person name="Youens-Clark K."/>
            <person name="Lutzoni F."/>
            <person name="Miadlikowska J."/>
            <person name="Eastwood D.C."/>
            <person name="Hamelin R.C."/>
            <person name="Grigoriev I.V."/>
            <person name="U'Ren J.M."/>
        </authorList>
    </citation>
    <scope>NUCLEOTIDE SEQUENCE [GENOMIC DNA]</scope>
    <source>
        <strain>CBS 123579</strain>
    </source>
</reference>
<reference key="2">
    <citation type="journal article" date="2024" name="Chem. Sci.">
        <title>Global genome mining-driven discovery of an unusual biosynthetic logic for fungal polyketide-terpenoid hybrids.</title>
        <authorList>
            <person name="Yan D."/>
            <person name="Matsuda Y."/>
        </authorList>
    </citation>
    <scope>FUNCTION</scope>
    <source>
        <strain>CBS 123579</strain>
    </source>
</reference>
<sequence length="462" mass="51726">MARLRRRWTAEEDTLLRRAVENATTQGRPLLWRDLAKSVPGRSNKDCRRRWWNSLADGTTKGPWCEEEDERLIEAVRKYGTNWSRVSRAIRSRNPDQCSSHWSQVLDPGINYCDWTPEEDANLLHAVLTHSTNWATIAASHVPPRTRLALKNRYSTLRLKHENESKRESTIRKSVETPPSNFEPTMAISKDVKWTPPAQIHQGRGPDPVDVLIESDEEEDDDDDDEDNEEDDGDDENRGDGNSKNSMPHIELGNSLNGVDNGAVDIQMQDTGVTASNDWADFTEPSALPPLDYFHHDAQHIPMDSWANDTESHVQYEDLLELTPGENYLCDMDDSGAMNTGVQYKSYGSTPTNIDLSNPIGFHELHRTVEIFPSTTTGMDSSSAPGSRDTPPSMHFGTSASTTPRTSISGWSHQSAHYQVCVNMICTGAQMESLMTGLASLGTCITMKIDIKEDKAPLENQL</sequence>
<keyword id="KW-0238">DNA-binding</keyword>
<keyword id="KW-0539">Nucleus</keyword>
<keyword id="KW-0677">Repeat</keyword>
<keyword id="KW-0804">Transcription</keyword>
<keyword id="KW-0805">Transcription regulation</keyword>
<evidence type="ECO:0000255" key="1">
    <source>
        <dbReference type="PROSITE-ProRule" id="PRU00625"/>
    </source>
</evidence>
<evidence type="ECO:0000256" key="2">
    <source>
        <dbReference type="SAM" id="MobiDB-lite"/>
    </source>
</evidence>
<evidence type="ECO:0000269" key="3">
    <source>
    </source>
</evidence>
<evidence type="ECO:0000303" key="4">
    <source>
    </source>
</evidence>
<name>MFMK_ANNMO</name>
<gene>
    <name evidence="4" type="primary">mfmK</name>
    <name type="ORF">F4805DRAFT_30213</name>
</gene>
<comment type="function">
    <text evidence="3">Myb-like transcriptional regulator; part of the gene cluster that mediates the biosynthesis of the phthalide-terpenoid hybrid 11'-O-desmethylfendlerol.</text>
</comment>
<comment type="subcellular location">
    <subcellularLocation>
        <location evidence="1">Nucleus</location>
    </subcellularLocation>
</comment>
<dbReference type="EMBL" id="MU403194">
    <property type="protein sequence ID" value="KAI1452422.1"/>
    <property type="molecule type" value="Genomic_DNA"/>
</dbReference>
<dbReference type="CDD" id="cd00167">
    <property type="entry name" value="SANT"/>
    <property type="match status" value="3"/>
</dbReference>
<dbReference type="Gene3D" id="1.10.10.60">
    <property type="entry name" value="Homeodomain-like"/>
    <property type="match status" value="3"/>
</dbReference>
<dbReference type="InterPro" id="IPR009057">
    <property type="entry name" value="Homeodomain-like_sf"/>
</dbReference>
<dbReference type="InterPro" id="IPR017930">
    <property type="entry name" value="Myb_dom"/>
</dbReference>
<dbReference type="InterPro" id="IPR050560">
    <property type="entry name" value="MYB_TF"/>
</dbReference>
<dbReference type="InterPro" id="IPR001005">
    <property type="entry name" value="SANT/Myb"/>
</dbReference>
<dbReference type="PANTHER" id="PTHR45614">
    <property type="entry name" value="MYB PROTEIN-RELATED"/>
    <property type="match status" value="1"/>
</dbReference>
<dbReference type="PANTHER" id="PTHR45614:SF199">
    <property type="entry name" value="MYB-LIKE TRANSCRIPTION FACTOR (EUROFUNG)-RELATED"/>
    <property type="match status" value="1"/>
</dbReference>
<dbReference type="Pfam" id="PF00249">
    <property type="entry name" value="Myb_DNA-binding"/>
    <property type="match status" value="3"/>
</dbReference>
<dbReference type="SMART" id="SM00717">
    <property type="entry name" value="SANT"/>
    <property type="match status" value="3"/>
</dbReference>
<dbReference type="SUPFAM" id="SSF46689">
    <property type="entry name" value="Homeodomain-like"/>
    <property type="match status" value="2"/>
</dbReference>
<dbReference type="PROSITE" id="PS51294">
    <property type="entry name" value="HTH_MYB"/>
    <property type="match status" value="3"/>
</dbReference>
<proteinExistence type="inferred from homology"/>